<keyword id="KW-0560">Oxidoreductase</keyword>
<keyword id="KW-1185">Reference proteome</keyword>
<keyword id="KW-0819">tRNA processing</keyword>
<feature type="chain" id="PRO_1000013752" description="tRNA uridine(34) hydroxylase">
    <location>
        <begin position="1"/>
        <end position="255"/>
    </location>
</feature>
<feature type="domain" description="Rhodanese" evidence="1">
    <location>
        <begin position="125"/>
        <end position="219"/>
    </location>
</feature>
<feature type="active site" description="Cysteine persulfide intermediate" evidence="1">
    <location>
        <position position="179"/>
    </location>
</feature>
<accession>Q1QPC1</accession>
<reference key="1">
    <citation type="submission" date="2006-03" db="EMBL/GenBank/DDBJ databases">
        <title>Complete sequence of chromosome of Nitrobacter hamburgensis X14.</title>
        <authorList>
            <consortium name="US DOE Joint Genome Institute"/>
            <person name="Copeland A."/>
            <person name="Lucas S."/>
            <person name="Lapidus A."/>
            <person name="Barry K."/>
            <person name="Detter J.C."/>
            <person name="Glavina del Rio T."/>
            <person name="Hammon N."/>
            <person name="Israni S."/>
            <person name="Dalin E."/>
            <person name="Tice H."/>
            <person name="Pitluck S."/>
            <person name="Chain P."/>
            <person name="Malfatti S."/>
            <person name="Shin M."/>
            <person name="Vergez L."/>
            <person name="Schmutz J."/>
            <person name="Larimer F."/>
            <person name="Land M."/>
            <person name="Hauser L."/>
            <person name="Kyrpides N."/>
            <person name="Ivanova N."/>
            <person name="Ward B."/>
            <person name="Arp D."/>
            <person name="Klotz M."/>
            <person name="Stein L."/>
            <person name="O'Mullan G."/>
            <person name="Starkenburg S."/>
            <person name="Sayavedra L."/>
            <person name="Poret-Peterson A.T."/>
            <person name="Gentry M.E."/>
            <person name="Bruce D."/>
            <person name="Richardson P."/>
        </authorList>
    </citation>
    <scope>NUCLEOTIDE SEQUENCE [LARGE SCALE GENOMIC DNA]</scope>
    <source>
        <strain>DSM 10229 / NCIMB 13809 / X14</strain>
    </source>
</reference>
<sequence length="255" mass="27896">MLKVAALYQFAPLPDFREVREPLRALCVGLSVKGTILLAGEGINGTVAGMPDAIDALAAELQTGTLFSGRLDNLELKFSQASVMPFARLKVRLKKEIVTLGDPATDPTRAVGIYVEPKDWNGLIAAPDTLLIDTRNAFEVAMGTFEGAVDPQLARFGEFKDFVAQKLDPDRHRRIAMFCTGGIRCEKASSYLLSRGFKEVYHLKGGILKYLEGIPESESCWRGECFVFDDRIALGHGLTESRRAGRLMDGAPGDD</sequence>
<dbReference type="EC" id="1.14.-.-" evidence="1"/>
<dbReference type="EMBL" id="CP000319">
    <property type="protein sequence ID" value="ABE61926.1"/>
    <property type="molecule type" value="Genomic_DNA"/>
</dbReference>
<dbReference type="RefSeq" id="WP_011509622.1">
    <property type="nucleotide sequence ID" value="NC_007964.1"/>
</dbReference>
<dbReference type="SMR" id="Q1QPC1"/>
<dbReference type="STRING" id="323097.Nham_1078"/>
<dbReference type="KEGG" id="nha:Nham_1078"/>
<dbReference type="eggNOG" id="COG1054">
    <property type="taxonomic scope" value="Bacteria"/>
</dbReference>
<dbReference type="HOGENOM" id="CLU_038878_0_1_5"/>
<dbReference type="OrthoDB" id="9778326at2"/>
<dbReference type="Proteomes" id="UP000001953">
    <property type="component" value="Chromosome"/>
</dbReference>
<dbReference type="GO" id="GO:0016705">
    <property type="term" value="F:oxidoreductase activity, acting on paired donors, with incorporation or reduction of molecular oxygen"/>
    <property type="evidence" value="ECO:0007669"/>
    <property type="project" value="UniProtKB-UniRule"/>
</dbReference>
<dbReference type="GO" id="GO:0006400">
    <property type="term" value="P:tRNA modification"/>
    <property type="evidence" value="ECO:0007669"/>
    <property type="project" value="UniProtKB-UniRule"/>
</dbReference>
<dbReference type="CDD" id="cd01518">
    <property type="entry name" value="RHOD_YceA"/>
    <property type="match status" value="1"/>
</dbReference>
<dbReference type="Gene3D" id="3.30.70.100">
    <property type="match status" value="1"/>
</dbReference>
<dbReference type="Gene3D" id="3.40.250.10">
    <property type="entry name" value="Rhodanese-like domain"/>
    <property type="match status" value="1"/>
</dbReference>
<dbReference type="HAMAP" id="MF_00469">
    <property type="entry name" value="TrhO"/>
    <property type="match status" value="1"/>
</dbReference>
<dbReference type="InterPro" id="IPR001763">
    <property type="entry name" value="Rhodanese-like_dom"/>
</dbReference>
<dbReference type="InterPro" id="IPR036873">
    <property type="entry name" value="Rhodanese-like_dom_sf"/>
</dbReference>
<dbReference type="InterPro" id="IPR020936">
    <property type="entry name" value="TrhO"/>
</dbReference>
<dbReference type="InterPro" id="IPR040503">
    <property type="entry name" value="TRHO_N"/>
</dbReference>
<dbReference type="NCBIfam" id="NF001136">
    <property type="entry name" value="PRK00142.1-4"/>
    <property type="match status" value="1"/>
</dbReference>
<dbReference type="PANTHER" id="PTHR43268:SF3">
    <property type="entry name" value="RHODANESE-LIKE DOMAIN-CONTAINING PROTEIN 7-RELATED"/>
    <property type="match status" value="1"/>
</dbReference>
<dbReference type="PANTHER" id="PTHR43268">
    <property type="entry name" value="THIOSULFATE SULFURTRANSFERASE/RHODANESE-LIKE DOMAIN-CONTAINING PROTEIN 2"/>
    <property type="match status" value="1"/>
</dbReference>
<dbReference type="Pfam" id="PF00581">
    <property type="entry name" value="Rhodanese"/>
    <property type="match status" value="1"/>
</dbReference>
<dbReference type="Pfam" id="PF17773">
    <property type="entry name" value="UPF0176_N"/>
    <property type="match status" value="1"/>
</dbReference>
<dbReference type="SMART" id="SM00450">
    <property type="entry name" value="RHOD"/>
    <property type="match status" value="1"/>
</dbReference>
<dbReference type="SUPFAM" id="SSF52821">
    <property type="entry name" value="Rhodanese/Cell cycle control phosphatase"/>
    <property type="match status" value="1"/>
</dbReference>
<dbReference type="PROSITE" id="PS50206">
    <property type="entry name" value="RHODANESE_3"/>
    <property type="match status" value="1"/>
</dbReference>
<proteinExistence type="inferred from homology"/>
<gene>
    <name evidence="1" type="primary">trhO</name>
    <name type="ordered locus">Nham_1078</name>
</gene>
<comment type="function">
    <text evidence="1">Catalyzes oxygen-dependent 5-hydroxyuridine (ho5U) modification at position 34 in tRNAs.</text>
</comment>
<comment type="catalytic activity">
    <reaction evidence="1">
        <text>uridine(34) in tRNA + AH2 + O2 = 5-hydroxyuridine(34) in tRNA + A + H2O</text>
        <dbReference type="Rhea" id="RHEA:64224"/>
        <dbReference type="Rhea" id="RHEA-COMP:11727"/>
        <dbReference type="Rhea" id="RHEA-COMP:13381"/>
        <dbReference type="ChEBI" id="CHEBI:13193"/>
        <dbReference type="ChEBI" id="CHEBI:15377"/>
        <dbReference type="ChEBI" id="CHEBI:15379"/>
        <dbReference type="ChEBI" id="CHEBI:17499"/>
        <dbReference type="ChEBI" id="CHEBI:65315"/>
        <dbReference type="ChEBI" id="CHEBI:136877"/>
    </reaction>
</comment>
<comment type="similarity">
    <text evidence="1">Belongs to the TrhO family.</text>
</comment>
<name>TRHO_NITHX</name>
<organism>
    <name type="scientific">Nitrobacter hamburgensis (strain DSM 10229 / NCIMB 13809 / X14)</name>
    <dbReference type="NCBI Taxonomy" id="323097"/>
    <lineage>
        <taxon>Bacteria</taxon>
        <taxon>Pseudomonadati</taxon>
        <taxon>Pseudomonadota</taxon>
        <taxon>Alphaproteobacteria</taxon>
        <taxon>Hyphomicrobiales</taxon>
        <taxon>Nitrobacteraceae</taxon>
        <taxon>Nitrobacter</taxon>
    </lineage>
</organism>
<evidence type="ECO:0000255" key="1">
    <source>
        <dbReference type="HAMAP-Rule" id="MF_00469"/>
    </source>
</evidence>
<protein>
    <recommendedName>
        <fullName evidence="1">tRNA uridine(34) hydroxylase</fullName>
        <ecNumber evidence="1">1.14.-.-</ecNumber>
    </recommendedName>
    <alternativeName>
        <fullName evidence="1">tRNA hydroxylation protein O</fullName>
    </alternativeName>
</protein>